<proteinExistence type="inferred from homology"/>
<gene>
    <name evidence="1" type="primary">acpS</name>
    <name type="ordered locus">EcolC_1114</name>
</gene>
<accession>B1IVR4</accession>
<keyword id="KW-0963">Cytoplasm</keyword>
<keyword id="KW-0275">Fatty acid biosynthesis</keyword>
<keyword id="KW-0276">Fatty acid metabolism</keyword>
<keyword id="KW-0444">Lipid biosynthesis</keyword>
<keyword id="KW-0443">Lipid metabolism</keyword>
<keyword id="KW-0460">Magnesium</keyword>
<keyword id="KW-0479">Metal-binding</keyword>
<keyword id="KW-0808">Transferase</keyword>
<dbReference type="EC" id="2.7.8.7" evidence="1"/>
<dbReference type="EMBL" id="CP000946">
    <property type="protein sequence ID" value="ACA76781.1"/>
    <property type="molecule type" value="Genomic_DNA"/>
</dbReference>
<dbReference type="RefSeq" id="WP_000986025.1">
    <property type="nucleotide sequence ID" value="NZ_MTFT01000002.1"/>
</dbReference>
<dbReference type="SMR" id="B1IVR4"/>
<dbReference type="KEGG" id="ecl:EcolC_1114"/>
<dbReference type="HOGENOM" id="CLU_089696_3_1_6"/>
<dbReference type="GO" id="GO:0005737">
    <property type="term" value="C:cytoplasm"/>
    <property type="evidence" value="ECO:0007669"/>
    <property type="project" value="UniProtKB-SubCell"/>
</dbReference>
<dbReference type="GO" id="GO:0008897">
    <property type="term" value="F:holo-[acyl-carrier-protein] synthase activity"/>
    <property type="evidence" value="ECO:0007669"/>
    <property type="project" value="UniProtKB-UniRule"/>
</dbReference>
<dbReference type="GO" id="GO:0000287">
    <property type="term" value="F:magnesium ion binding"/>
    <property type="evidence" value="ECO:0007669"/>
    <property type="project" value="UniProtKB-UniRule"/>
</dbReference>
<dbReference type="GO" id="GO:0006633">
    <property type="term" value="P:fatty acid biosynthetic process"/>
    <property type="evidence" value="ECO:0007669"/>
    <property type="project" value="UniProtKB-UniRule"/>
</dbReference>
<dbReference type="FunFam" id="3.90.470.20:FF:000001">
    <property type="entry name" value="Holo-[acyl-carrier-protein] synthase"/>
    <property type="match status" value="1"/>
</dbReference>
<dbReference type="Gene3D" id="3.90.470.20">
    <property type="entry name" value="4'-phosphopantetheinyl transferase domain"/>
    <property type="match status" value="1"/>
</dbReference>
<dbReference type="HAMAP" id="MF_00101">
    <property type="entry name" value="AcpS"/>
    <property type="match status" value="1"/>
</dbReference>
<dbReference type="InterPro" id="IPR008278">
    <property type="entry name" value="4-PPantetheinyl_Trfase_dom"/>
</dbReference>
<dbReference type="InterPro" id="IPR037143">
    <property type="entry name" value="4-PPantetheinyl_Trfase_dom_sf"/>
</dbReference>
<dbReference type="InterPro" id="IPR002582">
    <property type="entry name" value="ACPS"/>
</dbReference>
<dbReference type="InterPro" id="IPR004568">
    <property type="entry name" value="Ppantetheine-prot_Trfase_dom"/>
</dbReference>
<dbReference type="NCBIfam" id="TIGR00516">
    <property type="entry name" value="acpS"/>
    <property type="match status" value="1"/>
</dbReference>
<dbReference type="NCBIfam" id="TIGR00556">
    <property type="entry name" value="pantethn_trn"/>
    <property type="match status" value="1"/>
</dbReference>
<dbReference type="Pfam" id="PF01648">
    <property type="entry name" value="ACPS"/>
    <property type="match status" value="1"/>
</dbReference>
<dbReference type="SUPFAM" id="SSF56214">
    <property type="entry name" value="4'-phosphopantetheinyl transferase"/>
    <property type="match status" value="1"/>
</dbReference>
<comment type="function">
    <text evidence="1">Transfers the 4'-phosphopantetheine moiety from coenzyme A to a Ser of acyl-carrier-protein.</text>
</comment>
<comment type="catalytic activity">
    <reaction evidence="1">
        <text>apo-[ACP] + CoA = holo-[ACP] + adenosine 3',5'-bisphosphate + H(+)</text>
        <dbReference type="Rhea" id="RHEA:12068"/>
        <dbReference type="Rhea" id="RHEA-COMP:9685"/>
        <dbReference type="Rhea" id="RHEA-COMP:9690"/>
        <dbReference type="ChEBI" id="CHEBI:15378"/>
        <dbReference type="ChEBI" id="CHEBI:29999"/>
        <dbReference type="ChEBI" id="CHEBI:57287"/>
        <dbReference type="ChEBI" id="CHEBI:58343"/>
        <dbReference type="ChEBI" id="CHEBI:64479"/>
        <dbReference type="EC" id="2.7.8.7"/>
    </reaction>
</comment>
<comment type="cofactor">
    <cofactor evidence="1">
        <name>Mg(2+)</name>
        <dbReference type="ChEBI" id="CHEBI:18420"/>
    </cofactor>
</comment>
<comment type="subcellular location">
    <subcellularLocation>
        <location evidence="1">Cytoplasm</location>
    </subcellularLocation>
</comment>
<comment type="similarity">
    <text evidence="1">Belongs to the P-Pant transferase superfamily. AcpS family.</text>
</comment>
<protein>
    <recommendedName>
        <fullName evidence="1">Holo-[acyl-carrier-protein] synthase</fullName>
        <shortName evidence="1">Holo-ACP synthase</shortName>
        <ecNumber evidence="1">2.7.8.7</ecNumber>
    </recommendedName>
    <alternativeName>
        <fullName evidence="1">4'-phosphopantetheinyl transferase AcpS</fullName>
    </alternativeName>
</protein>
<feature type="chain" id="PRO_1000075640" description="Holo-[acyl-carrier-protein] synthase">
    <location>
        <begin position="1"/>
        <end position="126"/>
    </location>
</feature>
<feature type="binding site" evidence="1">
    <location>
        <position position="9"/>
    </location>
    <ligand>
        <name>Mg(2+)</name>
        <dbReference type="ChEBI" id="CHEBI:18420"/>
    </ligand>
</feature>
<feature type="binding site" evidence="1">
    <location>
        <position position="58"/>
    </location>
    <ligand>
        <name>Mg(2+)</name>
        <dbReference type="ChEBI" id="CHEBI:18420"/>
    </ligand>
</feature>
<name>ACPS_ECOLC</name>
<reference key="1">
    <citation type="submission" date="2008-02" db="EMBL/GenBank/DDBJ databases">
        <title>Complete sequence of Escherichia coli C str. ATCC 8739.</title>
        <authorList>
            <person name="Copeland A."/>
            <person name="Lucas S."/>
            <person name="Lapidus A."/>
            <person name="Glavina del Rio T."/>
            <person name="Dalin E."/>
            <person name="Tice H."/>
            <person name="Bruce D."/>
            <person name="Goodwin L."/>
            <person name="Pitluck S."/>
            <person name="Kiss H."/>
            <person name="Brettin T."/>
            <person name="Detter J.C."/>
            <person name="Han C."/>
            <person name="Kuske C.R."/>
            <person name="Schmutz J."/>
            <person name="Larimer F."/>
            <person name="Land M."/>
            <person name="Hauser L."/>
            <person name="Kyrpides N."/>
            <person name="Mikhailova N."/>
            <person name="Ingram L."/>
            <person name="Richardson P."/>
        </authorList>
    </citation>
    <scope>NUCLEOTIDE SEQUENCE [LARGE SCALE GENOMIC DNA]</scope>
    <source>
        <strain>ATCC 8739 / DSM 1576 / NBRC 3972 / NCIMB 8545 / WDCM 00012 / Crooks</strain>
    </source>
</reference>
<organism>
    <name type="scientific">Escherichia coli (strain ATCC 8739 / DSM 1576 / NBRC 3972 / NCIMB 8545 / WDCM 00012 / Crooks)</name>
    <dbReference type="NCBI Taxonomy" id="481805"/>
    <lineage>
        <taxon>Bacteria</taxon>
        <taxon>Pseudomonadati</taxon>
        <taxon>Pseudomonadota</taxon>
        <taxon>Gammaproteobacteria</taxon>
        <taxon>Enterobacterales</taxon>
        <taxon>Enterobacteriaceae</taxon>
        <taxon>Escherichia</taxon>
    </lineage>
</organism>
<evidence type="ECO:0000255" key="1">
    <source>
        <dbReference type="HAMAP-Rule" id="MF_00101"/>
    </source>
</evidence>
<sequence length="126" mass="14080">MAILGLGTDIVEIARIEAVIARSGDRLARRVLSDNEWAIWKTHHQPVRFLAKRFAVKEAAAKAFGTGIRNGLAFNQFEVFNDELGKPRLRLWGEALKLAEKLGVVNMHVTLADERHYACATVIIES</sequence>